<comment type="function">
    <text evidence="1">IGPS catalyzes the conversion of PRFAR and glutamine to IGP, AICAR and glutamate. The HisF subunit catalyzes the cyclization activity that produces IGP and AICAR from PRFAR using the ammonia provided by the HisH subunit.</text>
</comment>
<comment type="catalytic activity">
    <reaction evidence="1">
        <text>5-[(5-phospho-1-deoxy-D-ribulos-1-ylimino)methylamino]-1-(5-phospho-beta-D-ribosyl)imidazole-4-carboxamide + L-glutamine = D-erythro-1-(imidazol-4-yl)glycerol 3-phosphate + 5-amino-1-(5-phospho-beta-D-ribosyl)imidazole-4-carboxamide + L-glutamate + H(+)</text>
        <dbReference type="Rhea" id="RHEA:24793"/>
        <dbReference type="ChEBI" id="CHEBI:15378"/>
        <dbReference type="ChEBI" id="CHEBI:29985"/>
        <dbReference type="ChEBI" id="CHEBI:58278"/>
        <dbReference type="ChEBI" id="CHEBI:58359"/>
        <dbReference type="ChEBI" id="CHEBI:58475"/>
        <dbReference type="ChEBI" id="CHEBI:58525"/>
        <dbReference type="EC" id="4.3.2.10"/>
    </reaction>
</comment>
<comment type="pathway">
    <text evidence="1">Amino-acid biosynthesis; L-histidine biosynthesis; L-histidine from 5-phospho-alpha-D-ribose 1-diphosphate: step 5/9.</text>
</comment>
<comment type="subunit">
    <text evidence="1">Heterodimer of HisH and HisF.</text>
</comment>
<comment type="subcellular location">
    <subcellularLocation>
        <location evidence="1">Cytoplasm</location>
    </subcellularLocation>
</comment>
<comment type="similarity">
    <text evidence="1">Belongs to the HisA/HisF family.</text>
</comment>
<dbReference type="EC" id="4.3.2.10" evidence="1"/>
<dbReference type="EMBL" id="CP000383">
    <property type="protein sequence ID" value="ABG58545.1"/>
    <property type="molecule type" value="Genomic_DNA"/>
</dbReference>
<dbReference type="RefSeq" id="WP_011584660.1">
    <property type="nucleotide sequence ID" value="NC_008255.1"/>
</dbReference>
<dbReference type="SMR" id="Q11VM1"/>
<dbReference type="STRING" id="269798.CHU_1273"/>
<dbReference type="KEGG" id="chu:CHU_1273"/>
<dbReference type="eggNOG" id="COG0107">
    <property type="taxonomic scope" value="Bacteria"/>
</dbReference>
<dbReference type="HOGENOM" id="CLU_048577_4_0_10"/>
<dbReference type="OrthoDB" id="9781903at2"/>
<dbReference type="UniPathway" id="UPA00031">
    <property type="reaction ID" value="UER00010"/>
</dbReference>
<dbReference type="Proteomes" id="UP000001822">
    <property type="component" value="Chromosome"/>
</dbReference>
<dbReference type="GO" id="GO:0005737">
    <property type="term" value="C:cytoplasm"/>
    <property type="evidence" value="ECO:0007669"/>
    <property type="project" value="UniProtKB-SubCell"/>
</dbReference>
<dbReference type="GO" id="GO:0000107">
    <property type="term" value="F:imidazoleglycerol-phosphate synthase activity"/>
    <property type="evidence" value="ECO:0007669"/>
    <property type="project" value="UniProtKB-UniRule"/>
</dbReference>
<dbReference type="GO" id="GO:0016829">
    <property type="term" value="F:lyase activity"/>
    <property type="evidence" value="ECO:0007669"/>
    <property type="project" value="UniProtKB-KW"/>
</dbReference>
<dbReference type="GO" id="GO:0000105">
    <property type="term" value="P:L-histidine biosynthetic process"/>
    <property type="evidence" value="ECO:0007669"/>
    <property type="project" value="UniProtKB-UniRule"/>
</dbReference>
<dbReference type="CDD" id="cd04731">
    <property type="entry name" value="HisF"/>
    <property type="match status" value="1"/>
</dbReference>
<dbReference type="FunFam" id="3.20.20.70:FF:000006">
    <property type="entry name" value="Imidazole glycerol phosphate synthase subunit HisF"/>
    <property type="match status" value="1"/>
</dbReference>
<dbReference type="Gene3D" id="3.20.20.70">
    <property type="entry name" value="Aldolase class I"/>
    <property type="match status" value="1"/>
</dbReference>
<dbReference type="HAMAP" id="MF_01013">
    <property type="entry name" value="HisF"/>
    <property type="match status" value="1"/>
</dbReference>
<dbReference type="InterPro" id="IPR013785">
    <property type="entry name" value="Aldolase_TIM"/>
</dbReference>
<dbReference type="InterPro" id="IPR006062">
    <property type="entry name" value="His_biosynth"/>
</dbReference>
<dbReference type="InterPro" id="IPR004651">
    <property type="entry name" value="HisF"/>
</dbReference>
<dbReference type="InterPro" id="IPR050064">
    <property type="entry name" value="IGPS_HisA/HisF"/>
</dbReference>
<dbReference type="InterPro" id="IPR011060">
    <property type="entry name" value="RibuloseP-bd_barrel"/>
</dbReference>
<dbReference type="NCBIfam" id="TIGR00735">
    <property type="entry name" value="hisF"/>
    <property type="match status" value="1"/>
</dbReference>
<dbReference type="PANTHER" id="PTHR21235:SF2">
    <property type="entry name" value="IMIDAZOLE GLYCEROL PHOSPHATE SYNTHASE HISHF"/>
    <property type="match status" value="1"/>
</dbReference>
<dbReference type="PANTHER" id="PTHR21235">
    <property type="entry name" value="IMIDAZOLE GLYCEROL PHOSPHATE SYNTHASE SUBUNIT HISF/H IGP SYNTHASE SUBUNIT HISF/H"/>
    <property type="match status" value="1"/>
</dbReference>
<dbReference type="Pfam" id="PF00977">
    <property type="entry name" value="His_biosynth"/>
    <property type="match status" value="1"/>
</dbReference>
<dbReference type="SUPFAM" id="SSF51366">
    <property type="entry name" value="Ribulose-phoshate binding barrel"/>
    <property type="match status" value="1"/>
</dbReference>
<feature type="chain" id="PRO_1000063052" description="Imidazole glycerol phosphate synthase subunit HisF">
    <location>
        <begin position="1"/>
        <end position="251"/>
    </location>
</feature>
<feature type="active site" evidence="1">
    <location>
        <position position="11"/>
    </location>
</feature>
<feature type="active site" evidence="1">
    <location>
        <position position="130"/>
    </location>
</feature>
<accession>Q11VM1</accession>
<gene>
    <name evidence="1" type="primary">hisF</name>
    <name type="ordered locus">CHU_1273</name>
</gene>
<proteinExistence type="inferred from homology"/>
<keyword id="KW-0028">Amino-acid biosynthesis</keyword>
<keyword id="KW-0963">Cytoplasm</keyword>
<keyword id="KW-0368">Histidine biosynthesis</keyword>
<keyword id="KW-0456">Lyase</keyword>
<keyword id="KW-1185">Reference proteome</keyword>
<name>HIS6_CYTH3</name>
<protein>
    <recommendedName>
        <fullName evidence="1">Imidazole glycerol phosphate synthase subunit HisF</fullName>
        <ecNumber evidence="1">4.3.2.10</ecNumber>
    </recommendedName>
    <alternativeName>
        <fullName evidence="1">IGP synthase cyclase subunit</fullName>
    </alternativeName>
    <alternativeName>
        <fullName evidence="1">IGP synthase subunit HisF</fullName>
    </alternativeName>
    <alternativeName>
        <fullName evidence="1">ImGP synthase subunit HisF</fullName>
        <shortName evidence="1">IGPS subunit HisF</shortName>
    </alternativeName>
</protein>
<evidence type="ECO:0000255" key="1">
    <source>
        <dbReference type="HAMAP-Rule" id="MF_01013"/>
    </source>
</evidence>
<sequence length="251" mass="26648">MLTKRIIPCLDVKDGKTVKGVNFLNLRDAGDPVELGALYSQQGADELVFLDITATLEKRGTLVELVKRVAQHINIPFTIGGGIGSIEDVSACLNAGADKVSVNSSAIKNPALIDQLSKEFGNQCIVVAIDTRNVGGMNLVHSHGGTKPTDLDTIAWAKEMQERGAGELLLTSMDKDGTKAGFANELTAYISTHVSIPIIASGGAGTMEHFTDVFTLGKADAALAASIFHFKEIAIPELKSYLSGKGIHMRK</sequence>
<reference key="1">
    <citation type="journal article" date="2007" name="Appl. Environ. Microbiol.">
        <title>Genome sequence of the cellulolytic gliding bacterium Cytophaga hutchinsonii.</title>
        <authorList>
            <person name="Xie G."/>
            <person name="Bruce D.C."/>
            <person name="Challacombe J.F."/>
            <person name="Chertkov O."/>
            <person name="Detter J.C."/>
            <person name="Gilna P."/>
            <person name="Han C.S."/>
            <person name="Lucas S."/>
            <person name="Misra M."/>
            <person name="Myers G.L."/>
            <person name="Richardson P."/>
            <person name="Tapia R."/>
            <person name="Thayer N."/>
            <person name="Thompson L.S."/>
            <person name="Brettin T.S."/>
            <person name="Henrissat B."/>
            <person name="Wilson D.B."/>
            <person name="McBride M.J."/>
        </authorList>
    </citation>
    <scope>NUCLEOTIDE SEQUENCE [LARGE SCALE GENOMIC DNA]</scope>
    <source>
        <strain>ATCC 33406 / DSM 1761 / JCM 20678 / CIP 103989 / IAM 12607 / NBRC 15051 / NCIMB 9469 / D465</strain>
    </source>
</reference>
<organism>
    <name type="scientific">Cytophaga hutchinsonii (strain ATCC 33406 / DSM 1761 / CIP 103989 / NBRC 15051 / NCIMB 9469 / D465)</name>
    <dbReference type="NCBI Taxonomy" id="269798"/>
    <lineage>
        <taxon>Bacteria</taxon>
        <taxon>Pseudomonadati</taxon>
        <taxon>Bacteroidota</taxon>
        <taxon>Cytophagia</taxon>
        <taxon>Cytophagales</taxon>
        <taxon>Cytophagaceae</taxon>
        <taxon>Cytophaga</taxon>
    </lineage>
</organism>